<accession>Q58G33</accession>
<accession>Q8GUT9</accession>
<accession>Q9ZPS8</accession>
<sequence>MKSQSHKPWNLVAGIFFPIITFFLSAPLVGHALYLFCMRNDHVYYRDFQSTLPRVQTLVSVSLLALFLLSNIGMFLRPRRLSYFLVIVFFIGFAYSGVYKMESRRFSPTPMCFKGEYNNGQGERKTEQYQVVKIEQSQGRLQRVHLRFVNSYALPPYDRRLLPSVKTGCCNRPGNCKLETVNATLWVTRNREGPPLETAMIYDRYGGNADIKDYYDMWRHELSVLYYDCMTCQVRIIKSPRLRKWWQFGVFLSSLTSLFR</sequence>
<organism>
    <name type="scientific">Arabidopsis thaliana</name>
    <name type="common">Mouse-ear cress</name>
    <dbReference type="NCBI Taxonomy" id="3702"/>
    <lineage>
        <taxon>Eukaryota</taxon>
        <taxon>Viridiplantae</taxon>
        <taxon>Streptophyta</taxon>
        <taxon>Embryophyta</taxon>
        <taxon>Tracheophyta</taxon>
        <taxon>Spermatophyta</taxon>
        <taxon>Magnoliopsida</taxon>
        <taxon>eudicotyledons</taxon>
        <taxon>Gunneridae</taxon>
        <taxon>Pentapetalae</taxon>
        <taxon>rosids</taxon>
        <taxon>malvids</taxon>
        <taxon>Brassicales</taxon>
        <taxon>Brassicaceae</taxon>
        <taxon>Camelineae</taxon>
        <taxon>Arabidopsis</taxon>
    </lineage>
</organism>
<reference key="1">
    <citation type="journal article" date="1999" name="Nature">
        <title>Sequence and analysis of chromosome 2 of the plant Arabidopsis thaliana.</title>
        <authorList>
            <person name="Lin X."/>
            <person name="Kaul S."/>
            <person name="Rounsley S.D."/>
            <person name="Shea T.P."/>
            <person name="Benito M.-I."/>
            <person name="Town C.D."/>
            <person name="Fujii C.Y."/>
            <person name="Mason T.M."/>
            <person name="Bowman C.L."/>
            <person name="Barnstead M.E."/>
            <person name="Feldblyum T.V."/>
            <person name="Buell C.R."/>
            <person name="Ketchum K.A."/>
            <person name="Lee J.J."/>
            <person name="Ronning C.M."/>
            <person name="Koo H.L."/>
            <person name="Moffat K.S."/>
            <person name="Cronin L.A."/>
            <person name="Shen M."/>
            <person name="Pai G."/>
            <person name="Van Aken S."/>
            <person name="Umayam L."/>
            <person name="Tallon L.J."/>
            <person name="Gill J.E."/>
            <person name="Adams M.D."/>
            <person name="Carrera A.J."/>
            <person name="Creasy T.H."/>
            <person name="Goodman H.M."/>
            <person name="Somerville C.R."/>
            <person name="Copenhaver G.P."/>
            <person name="Preuss D."/>
            <person name="Nierman W.C."/>
            <person name="White O."/>
            <person name="Eisen J.A."/>
            <person name="Salzberg S.L."/>
            <person name="Fraser C.M."/>
            <person name="Venter J.C."/>
        </authorList>
    </citation>
    <scope>NUCLEOTIDE SEQUENCE [LARGE SCALE GENOMIC DNA]</scope>
    <source>
        <strain>cv. Columbia</strain>
    </source>
</reference>
<reference key="2">
    <citation type="journal article" date="2017" name="Plant J.">
        <title>Araport11: a complete reannotation of the Arabidopsis thaliana reference genome.</title>
        <authorList>
            <person name="Cheng C.Y."/>
            <person name="Krishnakumar V."/>
            <person name="Chan A.P."/>
            <person name="Thibaud-Nissen F."/>
            <person name="Schobel S."/>
            <person name="Town C.D."/>
        </authorList>
    </citation>
    <scope>GENOME REANNOTATION</scope>
    <source>
        <strain>cv. Columbia</strain>
    </source>
</reference>
<reference key="3">
    <citation type="journal article" date="2002" name="Plant Physiol.">
        <title>Cloning and sequencing of cDNAs for hypothetical genes from chromosome 2 of Arabidopsis.</title>
        <authorList>
            <person name="Xiao Y.-L."/>
            <person name="Malik M."/>
            <person name="Whitelaw C.A."/>
            <person name="Town C.D."/>
        </authorList>
    </citation>
    <scope>NUCLEOTIDE SEQUENCE [LARGE SCALE MRNA]</scope>
    <source>
        <strain>cv. Columbia</strain>
    </source>
</reference>
<reference key="4">
    <citation type="submission" date="2005-03" db="EMBL/GenBank/DDBJ databases">
        <authorList>
            <person name="Underwood B.A."/>
            <person name="Xiao Y.-L."/>
            <person name="Moskal W.A. Jr."/>
            <person name="Monaghan E.L."/>
            <person name="Wang W."/>
            <person name="Redman J.C."/>
            <person name="Wu H.C."/>
            <person name="Utterback T."/>
            <person name="Town C.D."/>
        </authorList>
    </citation>
    <scope>NUCLEOTIDE SEQUENCE [LARGE SCALE MRNA]</scope>
    <source>
        <strain>cv. Columbia</strain>
    </source>
</reference>
<protein>
    <recommendedName>
        <fullName>Tetraspanin-14</fullName>
    </recommendedName>
</protein>
<evidence type="ECO:0000250" key="1"/>
<evidence type="ECO:0000255" key="2"/>
<evidence type="ECO:0000305" key="3"/>
<name>TET14_ARATH</name>
<dbReference type="EMBL" id="AC006532">
    <property type="protein sequence ID" value="AAD20089.1"/>
    <property type="status" value="ALT_SEQ"/>
    <property type="molecule type" value="Genomic_DNA"/>
</dbReference>
<dbReference type="EMBL" id="CP002685">
    <property type="protein sequence ID" value="AEC05527.1"/>
    <property type="molecule type" value="Genomic_DNA"/>
</dbReference>
<dbReference type="EMBL" id="AY168991">
    <property type="protein sequence ID" value="AAO11662.1"/>
    <property type="molecule type" value="mRNA"/>
</dbReference>
<dbReference type="EMBL" id="AY954776">
    <property type="protein sequence ID" value="AAX55102.1"/>
    <property type="molecule type" value="mRNA"/>
</dbReference>
<dbReference type="PIR" id="C84431">
    <property type="entry name" value="C84431"/>
</dbReference>
<dbReference type="RefSeq" id="NP_178305.2">
    <property type="nucleotide sequence ID" value="NM_126257.3"/>
</dbReference>
<dbReference type="STRING" id="3702.Q58G33"/>
<dbReference type="TCDB" id="8.A.40.6.1">
    <property type="family name" value="the tetraspanin (tetraspanin) family"/>
</dbReference>
<dbReference type="GlyCosmos" id="Q58G33">
    <property type="glycosylation" value="1 site, No reported glycans"/>
</dbReference>
<dbReference type="GlyGen" id="Q58G33">
    <property type="glycosylation" value="2 sites"/>
</dbReference>
<dbReference type="PaxDb" id="3702-AT2G01960.1"/>
<dbReference type="ProteomicsDB" id="226601"/>
<dbReference type="EnsemblPlants" id="AT2G01960.1">
    <property type="protein sequence ID" value="AT2G01960.1"/>
    <property type="gene ID" value="AT2G01960"/>
</dbReference>
<dbReference type="GeneID" id="814727"/>
<dbReference type="Gramene" id="AT2G01960.1">
    <property type="protein sequence ID" value="AT2G01960.1"/>
    <property type="gene ID" value="AT2G01960"/>
</dbReference>
<dbReference type="KEGG" id="ath:AT2G01960"/>
<dbReference type="Araport" id="AT2G01960"/>
<dbReference type="TAIR" id="AT2G01960">
    <property type="gene designation" value="TET14"/>
</dbReference>
<dbReference type="HOGENOM" id="CLU_1079044_0_0_1"/>
<dbReference type="InParanoid" id="Q58G33"/>
<dbReference type="OMA" id="MWRHELS"/>
<dbReference type="PhylomeDB" id="Q58G33"/>
<dbReference type="PRO" id="PR:Q58G33"/>
<dbReference type="Proteomes" id="UP000006548">
    <property type="component" value="Chromosome 2"/>
</dbReference>
<dbReference type="ExpressionAtlas" id="Q58G33">
    <property type="expression patterns" value="differential"/>
</dbReference>
<dbReference type="GO" id="GO:0016020">
    <property type="term" value="C:membrane"/>
    <property type="evidence" value="ECO:0007669"/>
    <property type="project" value="UniProtKB-SubCell"/>
</dbReference>
<dbReference type="GO" id="GO:0009734">
    <property type="term" value="P:auxin-activated signaling pathway"/>
    <property type="evidence" value="ECO:0007669"/>
    <property type="project" value="InterPro"/>
</dbReference>
<dbReference type="InterPro" id="IPR044991">
    <property type="entry name" value="TET_plant"/>
</dbReference>
<dbReference type="PANTHER" id="PTHR32191">
    <property type="entry name" value="TETRASPANIN-8-RELATED"/>
    <property type="match status" value="1"/>
</dbReference>
<gene>
    <name type="primary">TET14</name>
    <name type="ordered locus">At2g01960</name>
    <name type="ORF">F14H20.3</name>
</gene>
<keyword id="KW-0325">Glycoprotein</keyword>
<keyword id="KW-0472">Membrane</keyword>
<keyword id="KW-1185">Reference proteome</keyword>
<keyword id="KW-0812">Transmembrane</keyword>
<keyword id="KW-1133">Transmembrane helix</keyword>
<proteinExistence type="evidence at transcript level"/>
<feature type="chain" id="PRO_0000421054" description="Tetraspanin-14">
    <location>
        <begin position="1"/>
        <end position="260"/>
    </location>
</feature>
<feature type="topological domain" description="Cytoplasmic" evidence="2">
    <location>
        <begin position="1"/>
        <end position="10"/>
    </location>
</feature>
<feature type="transmembrane region" description="Helical" evidence="2">
    <location>
        <begin position="11"/>
        <end position="31"/>
    </location>
</feature>
<feature type="topological domain" description="Extracellular" evidence="2">
    <location>
        <begin position="32"/>
        <end position="54"/>
    </location>
</feature>
<feature type="transmembrane region" description="Helical" evidence="2">
    <location>
        <begin position="55"/>
        <end position="75"/>
    </location>
</feature>
<feature type="topological domain" description="Cytoplasmic" evidence="2">
    <location>
        <begin position="76"/>
        <end position="80"/>
    </location>
</feature>
<feature type="transmembrane region" description="Helical" evidence="2">
    <location>
        <begin position="81"/>
        <end position="101"/>
    </location>
</feature>
<feature type="topological domain" description="Extracellular" evidence="2">
    <location>
        <begin position="102"/>
        <end position="260"/>
    </location>
</feature>
<feature type="glycosylation site" description="N-linked (GlcNAc...) asparagine" evidence="2">
    <location>
        <position position="182"/>
    </location>
</feature>
<comment type="function">
    <text evidence="1">May be involved in the regulation of cell differentiation.</text>
</comment>
<comment type="subcellular location">
    <subcellularLocation>
        <location evidence="1">Membrane</location>
        <topology evidence="3">Multi-pass membrane protein</topology>
    </subcellularLocation>
</comment>
<comment type="similarity">
    <text evidence="3">Belongs to the tetraspanin (TM4SF) family.</text>
</comment>
<comment type="sequence caution" evidence="3">
    <conflict type="erroneous gene model prediction">
        <sequence resource="EMBL-CDS" id="AAD20089"/>
    </conflict>
</comment>